<reference key="1">
    <citation type="journal article" date="1987" name="J. Mol. Biol.">
        <title>Receptor-recognizing proteins of T-even type bacteriophages. Constant and hypervariable regions and an unusual case of evolution.</title>
        <authorList>
            <person name="Montag D."/>
            <person name="Riede I."/>
            <person name="Eschbach M.-L."/>
            <person name="Degen M."/>
            <person name="Henning U."/>
        </authorList>
    </citation>
    <scope>NUCLEOTIDE SEQUENCE [GENOMIC DNA]</scope>
</reference>
<reference key="2">
    <citation type="journal article" date="1990" name="J. Mol. Biol.">
        <title>Receptor-recognizing proteins of T-even type bacteriophages. The receptor-recognizing area of proteins 37 of phages T4 TuIa and TuIb.</title>
        <authorList>
            <person name="Montag D."/>
            <person name="Hashemolhosseini S."/>
            <person name="Henning U."/>
        </authorList>
    </citation>
    <scope>NUCLEOTIDE SEQUENCE [GENOMIC DNA]</scope>
    <source>
        <strain>TuIb</strain>
    </source>
</reference>
<reference key="3">
    <citation type="journal article" date="2003" name="Microbiol. Mol. Biol. Rev.">
        <title>Bacteriophage T4 genome.</title>
        <authorList>
            <person name="Miller E.S."/>
            <person name="Kutter E."/>
            <person name="Mosig G."/>
            <person name="Arisaka F."/>
            <person name="Kunisawa T."/>
            <person name="Ruger W."/>
        </authorList>
    </citation>
    <scope>NUCLEOTIDE SEQUENCE [LARGE SCALE GENOMIC DNA]</scope>
</reference>
<reference key="4">
    <citation type="journal article" date="1981" name="J. Mol. Biol.">
        <title>DNA sequence of the tail fibre genes 36 and 37 of bacteriophage T4.</title>
        <authorList>
            <person name="Oliver D.B."/>
            <person name="Crowther R.A."/>
        </authorList>
    </citation>
    <scope>NUCLEOTIDE SEQUENCE [GENOMIC DNA] OF 1-132</scope>
</reference>
<reference key="5">
    <citation type="journal article" date="1994" name="J. Mol. Biol.">
        <title>Determinants of receptor specificity of coliphages of the T4 family. A chaperone alters the host range.</title>
        <authorList>
            <person name="Hashemolhosseini S."/>
            <person name="Montag D."/>
            <person name="Kramer L."/>
            <person name="Henning U."/>
        </authorList>
    </citation>
    <scope>FUNCTION</scope>
</reference>
<comment type="function">
    <text evidence="1 2">Chaperone involved, together with gp57, in the assembly of the distal-half tail fiber of T4 (By similarity). It is necessary for the maturation of protein gp37 to the dimeric structural subunit P37 (PubMed:8057378).</text>
</comment>
<comment type="similarity">
    <text evidence="3">Belongs to the tfa family.</text>
</comment>
<evidence type="ECO:0000250" key="1">
    <source>
        <dbReference type="UniProtKB" id="P03740"/>
    </source>
</evidence>
<evidence type="ECO:0000269" key="2">
    <source>
    </source>
</evidence>
<evidence type="ECO:0000305" key="3"/>
<sequence>MKIYHYYFDTKEFYKEENYKPVKGLGLPAHSTIKKPLEPKEGYAVVFDERTQDWIYEEDHRGKRAWTFNKEEIFISDIGSPVGITFDEPGEFDIWTDDGWKEDETYKRVLIRNRKIEELYKEFQVLNNMIEASVANKKEKFYYKNLKRFFALLEKHEHLGGEFPSWPEKEQKPWYKRLFKHYV</sequence>
<feature type="chain" id="PRO_0000070309" description="Tail fiber assembly protein">
    <location>
        <begin position="1"/>
        <end position="183"/>
    </location>
</feature>
<feature type="sequence conflict" description="In Ref. 2; CAA38976." evidence="3" ref="2">
    <original>Q</original>
    <variation>R</variation>
    <location>
        <position position="171"/>
    </location>
</feature>
<name>TFA_BPT4</name>
<organismHost>
    <name type="scientific">Escherichia coli</name>
    <dbReference type="NCBI Taxonomy" id="562"/>
</organismHost>
<dbReference type="EMBL" id="X05677">
    <property type="protein sequence ID" value="CAA29163.1"/>
    <property type="molecule type" value="Genomic_DNA"/>
</dbReference>
<dbReference type="EMBL" id="X55191">
    <property type="protein sequence ID" value="CAA38976.1"/>
    <property type="molecule type" value="Genomic_DNA"/>
</dbReference>
<dbReference type="EMBL" id="AF158101">
    <property type="protein sequence ID" value="AAD42461.1"/>
    <property type="molecule type" value="Genomic_DNA"/>
</dbReference>
<dbReference type="EMBL" id="J02509">
    <property type="protein sequence ID" value="AAA32515.1"/>
    <property type="molecule type" value="Genomic_DNA"/>
</dbReference>
<dbReference type="PIR" id="A94692">
    <property type="entry name" value="TLBP84"/>
</dbReference>
<dbReference type="PIR" id="S13240">
    <property type="entry name" value="S13240"/>
</dbReference>
<dbReference type="RefSeq" id="NP_049864.1">
    <property type="nucleotide sequence ID" value="NC_000866.4"/>
</dbReference>
<dbReference type="GeneID" id="1258706"/>
<dbReference type="KEGG" id="vg:1258706"/>
<dbReference type="OrthoDB" id="8423at10239"/>
<dbReference type="Proteomes" id="UP000009087">
    <property type="component" value="Segment"/>
</dbReference>
<dbReference type="GO" id="GO:0098004">
    <property type="term" value="P:virus tail fiber assembly"/>
    <property type="evidence" value="ECO:0007669"/>
    <property type="project" value="UniProtKB-KW"/>
</dbReference>
<proteinExistence type="inferred from homology"/>
<organism>
    <name type="scientific">Enterobacteria phage T4</name>
    <name type="common">Bacteriophage T4</name>
    <dbReference type="NCBI Taxonomy" id="10665"/>
    <lineage>
        <taxon>Viruses</taxon>
        <taxon>Duplodnaviria</taxon>
        <taxon>Heunggongvirae</taxon>
        <taxon>Uroviricota</taxon>
        <taxon>Caudoviricetes</taxon>
        <taxon>Straboviridae</taxon>
        <taxon>Tevenvirinae</taxon>
        <taxon>Tequatrovirus</taxon>
    </lineage>
</organism>
<protein>
    <recommendedName>
        <fullName evidence="3">Tail fiber assembly protein</fullName>
    </recommendedName>
    <alternativeName>
        <fullName>Gene product 38</fullName>
        <shortName>gp38</shortName>
    </alternativeName>
    <alternativeName>
        <fullName evidence="3">Receptor recognizing protein</fullName>
    </alternativeName>
</protein>
<keyword id="KW-0143">Chaperone</keyword>
<keyword id="KW-1185">Reference proteome</keyword>
<keyword id="KW-1188">Viral release from host cell</keyword>
<keyword id="KW-1245">Viral tail assembly</keyword>
<keyword id="KW-1246">Viral tail fiber assembly</keyword>
<accession>P03739</accession>
<accession>Q99364</accession>
<gene>
    <name type="primary">38</name>
</gene>